<keyword id="KW-0007">Acetylation</keyword>
<keyword id="KW-0597">Phosphoprotein</keyword>
<keyword id="KW-1185">Reference proteome</keyword>
<proteinExistence type="evidence at protein level"/>
<name>IDS2_YEAST</name>
<reference key="1">
    <citation type="journal article" date="1995" name="Mol. Cell. Biol.">
        <title>Stimulation of later functions of the yeast meiotic protein kinase Ime2p by the IDS2 gene product.</title>
        <authorList>
            <person name="Sia R.A."/>
            <person name="Mitchell A.P."/>
        </authorList>
    </citation>
    <scope>NUCLEOTIDE SEQUENCE [GENOMIC DNA]</scope>
    <source>
        <strain>SK1</strain>
    </source>
</reference>
<reference key="2">
    <citation type="journal article" date="1996" name="Yeast">
        <title>Sequence analysis of a 40.7 kb segment from the left arm of yeast chromosome X reveals 14 known genes and 13 new open reading frames including homologues of genes clustered on the right arm of chromosome XI.</title>
        <authorList>
            <person name="Katsoulou C."/>
            <person name="Tzermia M."/>
            <person name="Tavernarakis N."/>
            <person name="Alexandraki D."/>
        </authorList>
    </citation>
    <scope>NUCLEOTIDE SEQUENCE [GENOMIC DNA]</scope>
    <source>
        <strain>ATCC 96604 / S288c / FY1679</strain>
    </source>
</reference>
<reference key="3">
    <citation type="journal article" date="1996" name="EMBO J.">
        <title>Complete nucleotide sequence of Saccharomyces cerevisiae chromosome X.</title>
        <authorList>
            <person name="Galibert F."/>
            <person name="Alexandraki D."/>
            <person name="Baur A."/>
            <person name="Boles E."/>
            <person name="Chalwatzis N."/>
            <person name="Chuat J.-C."/>
            <person name="Coster F."/>
            <person name="Cziepluch C."/>
            <person name="de Haan M."/>
            <person name="Domdey H."/>
            <person name="Durand P."/>
            <person name="Entian K.-D."/>
            <person name="Gatius M."/>
            <person name="Goffeau A."/>
            <person name="Grivell L.A."/>
            <person name="Hennemann A."/>
            <person name="Herbert C.J."/>
            <person name="Heumann K."/>
            <person name="Hilger F."/>
            <person name="Hollenberg C.P."/>
            <person name="Huang M.-E."/>
            <person name="Jacq C."/>
            <person name="Jauniaux J.-C."/>
            <person name="Katsoulou C."/>
            <person name="Kirchrath L."/>
            <person name="Kleine K."/>
            <person name="Kordes E."/>
            <person name="Koetter P."/>
            <person name="Liebl S."/>
            <person name="Louis E.J."/>
            <person name="Manus V."/>
            <person name="Mewes H.-W."/>
            <person name="Miosga T."/>
            <person name="Obermaier B."/>
            <person name="Perea J."/>
            <person name="Pohl T.M."/>
            <person name="Portetelle D."/>
            <person name="Pujol A."/>
            <person name="Purnelle B."/>
            <person name="Ramezani Rad M."/>
            <person name="Rasmussen S.W."/>
            <person name="Rose M."/>
            <person name="Rossau R."/>
            <person name="Schaaff-Gerstenschlaeger I."/>
            <person name="Smits P.H.M."/>
            <person name="Scarcez T."/>
            <person name="Soriano N."/>
            <person name="To Van D."/>
            <person name="Tzermia M."/>
            <person name="Van Broekhoven A."/>
            <person name="Vandenbol M."/>
            <person name="Wedler H."/>
            <person name="von Wettstein D."/>
            <person name="Wambutt R."/>
            <person name="Zagulski M."/>
            <person name="Zollner A."/>
            <person name="Karpfinger-Hartl L."/>
        </authorList>
    </citation>
    <scope>NUCLEOTIDE SEQUENCE [LARGE SCALE GENOMIC DNA]</scope>
    <source>
        <strain>ATCC 204508 / S288c</strain>
    </source>
</reference>
<reference key="4">
    <citation type="journal article" date="2014" name="G3 (Bethesda)">
        <title>The reference genome sequence of Saccharomyces cerevisiae: Then and now.</title>
        <authorList>
            <person name="Engel S.R."/>
            <person name="Dietrich F.S."/>
            <person name="Fisk D.G."/>
            <person name="Binkley G."/>
            <person name="Balakrishnan R."/>
            <person name="Costanzo M.C."/>
            <person name="Dwight S.S."/>
            <person name="Hitz B.C."/>
            <person name="Karra K."/>
            <person name="Nash R.S."/>
            <person name="Weng S."/>
            <person name="Wong E.D."/>
            <person name="Lloyd P."/>
            <person name="Skrzypek M.S."/>
            <person name="Miyasato S.R."/>
            <person name="Simison M."/>
            <person name="Cherry J.M."/>
        </authorList>
    </citation>
    <scope>GENOME REANNOTATION</scope>
    <source>
        <strain>ATCC 204508 / S288c</strain>
    </source>
</reference>
<reference key="5">
    <citation type="journal article" date="2003" name="Nature">
        <title>Global analysis of protein expression in yeast.</title>
        <authorList>
            <person name="Ghaemmaghami S."/>
            <person name="Huh W.-K."/>
            <person name="Bower K."/>
            <person name="Howson R.W."/>
            <person name="Belle A."/>
            <person name="Dephoure N."/>
            <person name="O'Shea E.K."/>
            <person name="Weissman J.S."/>
        </authorList>
    </citation>
    <scope>LEVEL OF PROTEIN EXPRESSION [LARGE SCALE ANALYSIS]</scope>
</reference>
<reference key="6">
    <citation type="journal article" date="2005" name="Mol. Cell. Proteomics">
        <title>Quantitative phosphoproteomics applied to the yeast pheromone signaling pathway.</title>
        <authorList>
            <person name="Gruhler A."/>
            <person name="Olsen J.V."/>
            <person name="Mohammed S."/>
            <person name="Mortensen P."/>
            <person name="Faergeman N.J."/>
            <person name="Mann M."/>
            <person name="Jensen O.N."/>
        </authorList>
    </citation>
    <scope>IDENTIFICATION BY MASS SPECTROMETRY [LARGE SCALE ANALYSIS]</scope>
    <source>
        <strain>YAL6B</strain>
    </source>
</reference>
<reference key="7">
    <citation type="journal article" date="2007" name="J. Proteome Res.">
        <title>Large-scale phosphorylation analysis of alpha-factor-arrested Saccharomyces cerevisiae.</title>
        <authorList>
            <person name="Li X."/>
            <person name="Gerber S.A."/>
            <person name="Rudner A.D."/>
            <person name="Beausoleil S.A."/>
            <person name="Haas W."/>
            <person name="Villen J."/>
            <person name="Elias J.E."/>
            <person name="Gygi S.P."/>
        </authorList>
    </citation>
    <scope>IDENTIFICATION BY MASS SPECTROMETRY [LARGE SCALE ANALYSIS]</scope>
    <source>
        <strain>ADR376</strain>
    </source>
</reference>
<reference key="8">
    <citation type="journal article" date="2008" name="Mol. Cell. Proteomics">
        <title>A multidimensional chromatography technology for in-depth phosphoproteome analysis.</title>
        <authorList>
            <person name="Albuquerque C.P."/>
            <person name="Smolka M.B."/>
            <person name="Payne S.H."/>
            <person name="Bafna V."/>
            <person name="Eng J."/>
            <person name="Zhou H."/>
        </authorList>
    </citation>
    <scope>PHOSPHORYLATION [LARGE SCALE ANALYSIS] AT THR-13; SER-130 AND SER-136</scope>
    <scope>IDENTIFICATION BY MASS SPECTROMETRY [LARGE SCALE ANALYSIS]</scope>
</reference>
<reference key="9">
    <citation type="journal article" date="2009" name="Science">
        <title>Global analysis of Cdk1 substrate phosphorylation sites provides insights into evolution.</title>
        <authorList>
            <person name="Holt L.J."/>
            <person name="Tuch B.B."/>
            <person name="Villen J."/>
            <person name="Johnson A.D."/>
            <person name="Gygi S.P."/>
            <person name="Morgan D.O."/>
        </authorList>
    </citation>
    <scope>PHOSPHORYLATION [LARGE SCALE ANALYSIS] AT SER-23; SER-27; SER-39; SER-122; SER-130; SER-136; SER-147 AND SER-148</scope>
    <scope>IDENTIFICATION BY MASS SPECTROMETRY [LARGE SCALE ANALYSIS]</scope>
</reference>
<reference key="10">
    <citation type="journal article" date="2012" name="Proc. Natl. Acad. Sci. U.S.A.">
        <title>N-terminal acetylome analyses and functional insights of the N-terminal acetyltransferase NatB.</title>
        <authorList>
            <person name="Van Damme P."/>
            <person name="Lasa M."/>
            <person name="Polevoda B."/>
            <person name="Gazquez C."/>
            <person name="Elosegui-Artola A."/>
            <person name="Kim D.S."/>
            <person name="De Juan-Pardo E."/>
            <person name="Demeyer K."/>
            <person name="Hole K."/>
            <person name="Larrea E."/>
            <person name="Timmerman E."/>
            <person name="Prieto J."/>
            <person name="Arnesen T."/>
            <person name="Sherman F."/>
            <person name="Gevaert K."/>
            <person name="Aldabe R."/>
        </authorList>
    </citation>
    <scope>ACETYLATION [LARGE SCALE ANALYSIS] AT MET-1</scope>
    <scope>IDENTIFICATION BY MASS SPECTROMETRY [LARGE SCALE ANALYSIS]</scope>
</reference>
<organism>
    <name type="scientific">Saccharomyces cerevisiae (strain ATCC 204508 / S288c)</name>
    <name type="common">Baker's yeast</name>
    <dbReference type="NCBI Taxonomy" id="559292"/>
    <lineage>
        <taxon>Eukaryota</taxon>
        <taxon>Fungi</taxon>
        <taxon>Dikarya</taxon>
        <taxon>Ascomycota</taxon>
        <taxon>Saccharomycotina</taxon>
        <taxon>Saccharomycetes</taxon>
        <taxon>Saccharomycetales</taxon>
        <taxon>Saccharomycetaceae</taxon>
        <taxon>Saccharomyces</taxon>
    </lineage>
</organism>
<dbReference type="EMBL" id="U21326">
    <property type="protein sequence ID" value="AAA87184.1"/>
    <property type="molecule type" value="Genomic_DNA"/>
</dbReference>
<dbReference type="EMBL" id="Z49421">
    <property type="protein sequence ID" value="CAA89441.1"/>
    <property type="molecule type" value="Genomic_DNA"/>
</dbReference>
<dbReference type="EMBL" id="X87371">
    <property type="protein sequence ID" value="CAA60809.1"/>
    <property type="molecule type" value="Genomic_DNA"/>
</dbReference>
<dbReference type="EMBL" id="BK006943">
    <property type="protein sequence ID" value="DAA08655.1"/>
    <property type="molecule type" value="Genomic_DNA"/>
</dbReference>
<dbReference type="PIR" id="S55167">
    <property type="entry name" value="S55167"/>
</dbReference>
<dbReference type="RefSeq" id="NP_012389.1">
    <property type="nucleotide sequence ID" value="NM_001181579.1"/>
</dbReference>
<dbReference type="BioGRID" id="33612">
    <property type="interactions" value="115"/>
</dbReference>
<dbReference type="DIP" id="DIP-902N"/>
<dbReference type="FunCoup" id="P46958">
    <property type="interactions" value="57"/>
</dbReference>
<dbReference type="IntAct" id="P46958">
    <property type="interactions" value="7"/>
</dbReference>
<dbReference type="MINT" id="P46958"/>
<dbReference type="STRING" id="4932.YJL146W"/>
<dbReference type="iPTMnet" id="P46958"/>
<dbReference type="PaxDb" id="4932-YJL146W"/>
<dbReference type="PeptideAtlas" id="P46958"/>
<dbReference type="EnsemblFungi" id="YJL146W_mRNA">
    <property type="protein sequence ID" value="YJL146W"/>
    <property type="gene ID" value="YJL146W"/>
</dbReference>
<dbReference type="GeneID" id="853295"/>
<dbReference type="KEGG" id="sce:YJL146W"/>
<dbReference type="AGR" id="SGD:S000003682"/>
<dbReference type="SGD" id="S000003682">
    <property type="gene designation" value="IDS2"/>
</dbReference>
<dbReference type="VEuPathDB" id="FungiDB:YJL146W"/>
<dbReference type="eggNOG" id="ENOG502R2Z2">
    <property type="taxonomic scope" value="Eukaryota"/>
</dbReference>
<dbReference type="HOGENOM" id="CLU_034560_0_0_1"/>
<dbReference type="InParanoid" id="P46958"/>
<dbReference type="OMA" id="CIREYMT"/>
<dbReference type="OrthoDB" id="2014201at2759"/>
<dbReference type="BioCyc" id="YEAST:G3O-31590-MONOMER"/>
<dbReference type="Reactome" id="R-SCE-3322077">
    <property type="pathway name" value="Glycogen synthesis"/>
</dbReference>
<dbReference type="Reactome" id="R-SCE-6798695">
    <property type="pathway name" value="Neutrophil degranulation"/>
</dbReference>
<dbReference type="Reactome" id="R-SCE-70221">
    <property type="pathway name" value="Glycogen breakdown (glycogenolysis)"/>
</dbReference>
<dbReference type="BioGRID-ORCS" id="853295">
    <property type="hits" value="0 hits in 10 CRISPR screens"/>
</dbReference>
<dbReference type="PRO" id="PR:P46958"/>
<dbReference type="Proteomes" id="UP000002311">
    <property type="component" value="Chromosome X"/>
</dbReference>
<dbReference type="RNAct" id="P46958">
    <property type="molecule type" value="protein"/>
</dbReference>
<dbReference type="GO" id="GO:0005737">
    <property type="term" value="C:cytoplasm"/>
    <property type="evidence" value="ECO:0007005"/>
    <property type="project" value="SGD"/>
</dbReference>
<dbReference type="GO" id="GO:0005634">
    <property type="term" value="C:nucleus"/>
    <property type="evidence" value="ECO:0007005"/>
    <property type="project" value="SGD"/>
</dbReference>
<dbReference type="GO" id="GO:0016757">
    <property type="term" value="F:glycosyltransferase activity"/>
    <property type="evidence" value="ECO:0000318"/>
    <property type="project" value="GO_Central"/>
</dbReference>
<dbReference type="GO" id="GO:0051087">
    <property type="term" value="F:protein-folding chaperone binding"/>
    <property type="evidence" value="ECO:0000314"/>
    <property type="project" value="SGD"/>
</dbReference>
<dbReference type="GO" id="GO:0061077">
    <property type="term" value="P:chaperone-mediated protein folding"/>
    <property type="evidence" value="ECO:0000315"/>
    <property type="project" value="SGD"/>
</dbReference>
<dbReference type="GO" id="GO:0051321">
    <property type="term" value="P:meiotic cell cycle"/>
    <property type="evidence" value="ECO:0000315"/>
    <property type="project" value="SGD"/>
</dbReference>
<dbReference type="FunFam" id="3.90.550.10:FF:000244">
    <property type="entry name" value="Ime2-dependent signaling-related protein"/>
    <property type="match status" value="1"/>
</dbReference>
<dbReference type="Gene3D" id="3.90.550.10">
    <property type="entry name" value="Spore Coat Polysaccharide Biosynthesis Protein SpsA, Chain A"/>
    <property type="match status" value="1"/>
</dbReference>
<dbReference type="InterPro" id="IPR050587">
    <property type="entry name" value="GNT1/Glycosyltrans_8"/>
</dbReference>
<dbReference type="InterPro" id="IPR029044">
    <property type="entry name" value="Nucleotide-diphossugar_trans"/>
</dbReference>
<dbReference type="PANTHER" id="PTHR11183">
    <property type="entry name" value="GLYCOGENIN SUBFAMILY MEMBER"/>
    <property type="match status" value="1"/>
</dbReference>
<dbReference type="SUPFAM" id="SSF53448">
    <property type="entry name" value="Nucleotide-diphospho-sugar transferases"/>
    <property type="match status" value="1"/>
</dbReference>
<feature type="chain" id="PRO_0000084152" description="IME2-dependent-signaling protein">
    <location>
        <begin position="1"/>
        <end position="469"/>
    </location>
</feature>
<feature type="region of interest" description="Disordered" evidence="1">
    <location>
        <begin position="22"/>
        <end position="55"/>
    </location>
</feature>
<feature type="region of interest" description="Disordered" evidence="1">
    <location>
        <begin position="67"/>
        <end position="92"/>
    </location>
</feature>
<feature type="region of interest" description="Disordered" evidence="1">
    <location>
        <begin position="117"/>
        <end position="143"/>
    </location>
</feature>
<feature type="compositionally biased region" description="Polar residues" evidence="1">
    <location>
        <begin position="25"/>
        <end position="42"/>
    </location>
</feature>
<feature type="compositionally biased region" description="Polar residues" evidence="1">
    <location>
        <begin position="67"/>
        <end position="82"/>
    </location>
</feature>
<feature type="modified residue" description="N-acetylmethionine" evidence="6">
    <location>
        <position position="1"/>
    </location>
</feature>
<feature type="modified residue" description="Phosphothreonine" evidence="4">
    <location>
        <position position="13"/>
    </location>
</feature>
<feature type="modified residue" description="Phosphoserine" evidence="5">
    <location>
        <position position="23"/>
    </location>
</feature>
<feature type="modified residue" description="Phosphoserine" evidence="5">
    <location>
        <position position="27"/>
    </location>
</feature>
<feature type="modified residue" description="Phosphoserine" evidence="5">
    <location>
        <position position="39"/>
    </location>
</feature>
<feature type="modified residue" description="Phosphoserine" evidence="5">
    <location>
        <position position="122"/>
    </location>
</feature>
<feature type="modified residue" description="Phosphoserine" evidence="4 5">
    <location>
        <position position="130"/>
    </location>
</feature>
<feature type="modified residue" description="Phosphoserine" evidence="4 5">
    <location>
        <position position="136"/>
    </location>
</feature>
<feature type="modified residue" description="Phosphoserine" evidence="5">
    <location>
        <position position="147"/>
    </location>
</feature>
<feature type="modified residue" description="Phosphoserine" evidence="5">
    <location>
        <position position="148"/>
    </location>
</feature>
<feature type="sequence conflict" description="In Ref. 1; AAA87184." evidence="3" ref="1">
    <original>G</original>
    <variation>GF</variation>
    <location>
        <position position="268"/>
    </location>
</feature>
<feature type="sequence conflict" description="In Ref. 1; AAA87184." evidence="3" ref="1">
    <original>S</original>
    <variation>R</variation>
    <location>
        <position position="282"/>
    </location>
</feature>
<feature type="sequence conflict" description="In Ref. 1; AAA87184." evidence="3" ref="1">
    <original>R</original>
    <variation>W</variation>
    <location>
        <position position="361"/>
    </location>
</feature>
<evidence type="ECO:0000256" key="1">
    <source>
        <dbReference type="SAM" id="MobiDB-lite"/>
    </source>
</evidence>
<evidence type="ECO:0000269" key="2">
    <source>
    </source>
</evidence>
<evidence type="ECO:0000305" key="3"/>
<evidence type="ECO:0007744" key="4">
    <source>
    </source>
</evidence>
<evidence type="ECO:0007744" key="5">
    <source>
    </source>
</evidence>
<evidence type="ECO:0007744" key="6">
    <source>
    </source>
</evidence>
<accession>P46958</accession>
<accession>D6VW39</accession>
<protein>
    <recommendedName>
        <fullName>IME2-dependent-signaling protein</fullName>
    </recommendedName>
</protein>
<comment type="function">
    <text>Seems to act indirectly to modify IME2 activity, thus permitting IME2 to carry out later meiotic functions.</text>
</comment>
<comment type="interaction">
    <interactant intactId="EBI-8906">
        <id>P46958</id>
    </interactant>
    <interactant intactId="EBI-17664">
        <id>P40317</id>
        <label>SOK1</label>
    </interactant>
    <organismsDiffer>false</organismsDiffer>
    <experiments>2</experiments>
</comment>
<comment type="miscellaneous">
    <text evidence="2">Present with 1850 molecules/cell in log phase SD medium.</text>
</comment>
<sequence length="469" mass="53216">MDNQQESISEDITGDLAAAVRKSWSESQDNPLLLNFNNSPIGTPTDRYSPEPATMMEGNAMNLSSLARGSTQQQQRLYGSSQTREKSDQQQQDYQLFKHHYSLGQETRESVSDILNDLTLGSPEPSERASPIRQPSVDVPPLTTRRSSIQDVQWIRHLLNPRSSFSGASSNEPTNSPGDFLNQSRAWITILHDSSAESLQAVIVLAESLKNVNSQYNLWVLHSSEVNAFQLAQVGIKTLIIDEYINLFMNFGTGSGFSASSQSTETKGELNFKWCKLFLFFSLIDRFELICYLSPTCLVLQNIDELLESTEVSDEIDNETCVLLSNKVNYINEDLVSVNQDQSSAENYDDDPQIIILKPNRAVAMCIKEYFTIYGNDFEGESKRSMFHQMNDLQIMKALFGDKWSYIDSVGYCAVPIASVPANRLNYKIIEFKILKPWERQNYIAAGQHRESIMNKWLDLWRDFLNQAN</sequence>
<gene>
    <name type="primary">IDS2</name>
    <name type="ordered locus">YJL146W</name>
    <name type="ORF">J0642</name>
</gene>